<keyword id="KW-0687">Ribonucleoprotein</keyword>
<keyword id="KW-0689">Ribosomal protein</keyword>
<keyword id="KW-0694">RNA-binding</keyword>
<keyword id="KW-0699">rRNA-binding</keyword>
<comment type="function">
    <text evidence="1">One of the primary rRNA binding proteins, it binds specifically to the 5'-end of 16S ribosomal RNA.</text>
</comment>
<comment type="subunit">
    <text evidence="1">Part of the 30S ribosomal subunit.</text>
</comment>
<comment type="similarity">
    <text evidence="1">Belongs to the universal ribosomal protein uS17 family.</text>
</comment>
<organism>
    <name type="scientific">Salmonella paratyphi C (strain RKS4594)</name>
    <dbReference type="NCBI Taxonomy" id="476213"/>
    <lineage>
        <taxon>Bacteria</taxon>
        <taxon>Pseudomonadati</taxon>
        <taxon>Pseudomonadota</taxon>
        <taxon>Gammaproteobacteria</taxon>
        <taxon>Enterobacterales</taxon>
        <taxon>Enterobacteriaceae</taxon>
        <taxon>Salmonella</taxon>
    </lineage>
</organism>
<protein>
    <recommendedName>
        <fullName evidence="1">Small ribosomal subunit protein uS17</fullName>
    </recommendedName>
    <alternativeName>
        <fullName evidence="2">30S ribosomal protein S17</fullName>
    </alternativeName>
</protein>
<proteinExistence type="inferred from homology"/>
<feature type="chain" id="PRO_1000166494" description="Small ribosomal subunit protein uS17">
    <location>
        <begin position="1"/>
        <end position="84"/>
    </location>
</feature>
<gene>
    <name evidence="1" type="primary">rpsQ</name>
    <name type="ordered locus">SPC_3500</name>
</gene>
<reference key="1">
    <citation type="journal article" date="2009" name="PLoS ONE">
        <title>Salmonella paratyphi C: genetic divergence from Salmonella choleraesuis and pathogenic convergence with Salmonella typhi.</title>
        <authorList>
            <person name="Liu W.-Q."/>
            <person name="Feng Y."/>
            <person name="Wang Y."/>
            <person name="Zou Q.-H."/>
            <person name="Chen F."/>
            <person name="Guo J.-T."/>
            <person name="Peng Y.-H."/>
            <person name="Jin Y."/>
            <person name="Li Y.-G."/>
            <person name="Hu S.-N."/>
            <person name="Johnston R.N."/>
            <person name="Liu G.-R."/>
            <person name="Liu S.-L."/>
        </authorList>
    </citation>
    <scope>NUCLEOTIDE SEQUENCE [LARGE SCALE GENOMIC DNA]</scope>
    <source>
        <strain>RKS4594</strain>
    </source>
</reference>
<name>RS17_SALPC</name>
<sequence length="84" mass="9722">MTDKIRTLQGRVVSDKMEKSIVVAIERFVKHPIYGKFIKRTTKMHVHDENNECGIGDVVEIRECRPLSKTKSWTLVRVVEKAVL</sequence>
<evidence type="ECO:0000255" key="1">
    <source>
        <dbReference type="HAMAP-Rule" id="MF_01345"/>
    </source>
</evidence>
<evidence type="ECO:0000305" key="2"/>
<accession>C0Q0A7</accession>
<dbReference type="EMBL" id="CP000857">
    <property type="protein sequence ID" value="ACN47584.1"/>
    <property type="molecule type" value="Genomic_DNA"/>
</dbReference>
<dbReference type="RefSeq" id="WP_000130101.1">
    <property type="nucleotide sequence ID" value="NC_012125.1"/>
</dbReference>
<dbReference type="SMR" id="C0Q0A7"/>
<dbReference type="GeneID" id="66757766"/>
<dbReference type="KEGG" id="sei:SPC_3500"/>
<dbReference type="HOGENOM" id="CLU_073626_1_1_6"/>
<dbReference type="Proteomes" id="UP000001599">
    <property type="component" value="Chromosome"/>
</dbReference>
<dbReference type="GO" id="GO:0022627">
    <property type="term" value="C:cytosolic small ribosomal subunit"/>
    <property type="evidence" value="ECO:0007669"/>
    <property type="project" value="TreeGrafter"/>
</dbReference>
<dbReference type="GO" id="GO:0019843">
    <property type="term" value="F:rRNA binding"/>
    <property type="evidence" value="ECO:0007669"/>
    <property type="project" value="UniProtKB-UniRule"/>
</dbReference>
<dbReference type="GO" id="GO:0003735">
    <property type="term" value="F:structural constituent of ribosome"/>
    <property type="evidence" value="ECO:0007669"/>
    <property type="project" value="InterPro"/>
</dbReference>
<dbReference type="GO" id="GO:0006412">
    <property type="term" value="P:translation"/>
    <property type="evidence" value="ECO:0007669"/>
    <property type="project" value="UniProtKB-UniRule"/>
</dbReference>
<dbReference type="CDD" id="cd00364">
    <property type="entry name" value="Ribosomal_uS17"/>
    <property type="match status" value="1"/>
</dbReference>
<dbReference type="FunFam" id="2.40.50.140:FF:000014">
    <property type="entry name" value="30S ribosomal protein S17"/>
    <property type="match status" value="1"/>
</dbReference>
<dbReference type="Gene3D" id="2.40.50.140">
    <property type="entry name" value="Nucleic acid-binding proteins"/>
    <property type="match status" value="1"/>
</dbReference>
<dbReference type="HAMAP" id="MF_01345_B">
    <property type="entry name" value="Ribosomal_uS17_B"/>
    <property type="match status" value="1"/>
</dbReference>
<dbReference type="InterPro" id="IPR012340">
    <property type="entry name" value="NA-bd_OB-fold"/>
</dbReference>
<dbReference type="InterPro" id="IPR000266">
    <property type="entry name" value="Ribosomal_uS17"/>
</dbReference>
<dbReference type="InterPro" id="IPR019984">
    <property type="entry name" value="Ribosomal_uS17_bact/chlr"/>
</dbReference>
<dbReference type="InterPro" id="IPR019979">
    <property type="entry name" value="Ribosomal_uS17_CS"/>
</dbReference>
<dbReference type="NCBIfam" id="NF004123">
    <property type="entry name" value="PRK05610.1"/>
    <property type="match status" value="1"/>
</dbReference>
<dbReference type="NCBIfam" id="TIGR03635">
    <property type="entry name" value="uS17_bact"/>
    <property type="match status" value="1"/>
</dbReference>
<dbReference type="PANTHER" id="PTHR10744">
    <property type="entry name" value="40S RIBOSOMAL PROTEIN S11 FAMILY MEMBER"/>
    <property type="match status" value="1"/>
</dbReference>
<dbReference type="PANTHER" id="PTHR10744:SF1">
    <property type="entry name" value="SMALL RIBOSOMAL SUBUNIT PROTEIN US17M"/>
    <property type="match status" value="1"/>
</dbReference>
<dbReference type="Pfam" id="PF00366">
    <property type="entry name" value="Ribosomal_S17"/>
    <property type="match status" value="1"/>
</dbReference>
<dbReference type="PRINTS" id="PR00973">
    <property type="entry name" value="RIBOSOMALS17"/>
</dbReference>
<dbReference type="SUPFAM" id="SSF50249">
    <property type="entry name" value="Nucleic acid-binding proteins"/>
    <property type="match status" value="1"/>
</dbReference>
<dbReference type="PROSITE" id="PS00056">
    <property type="entry name" value="RIBOSOMAL_S17"/>
    <property type="match status" value="1"/>
</dbReference>